<organism>
    <name type="scientific">Buchnera aphidicola subsp. Schizaphis graminum (strain Sg)</name>
    <dbReference type="NCBI Taxonomy" id="198804"/>
    <lineage>
        <taxon>Bacteria</taxon>
        <taxon>Pseudomonadati</taxon>
        <taxon>Pseudomonadota</taxon>
        <taxon>Gammaproteobacteria</taxon>
        <taxon>Enterobacterales</taxon>
        <taxon>Erwiniaceae</taxon>
        <taxon>Buchnera</taxon>
    </lineage>
</organism>
<comment type="subcellular location">
    <subcellularLocation>
        <location evidence="1">Secreted</location>
    </subcellularLocation>
    <subcellularLocation>
        <location evidence="1">Bacterial flagellum</location>
    </subcellularLocation>
</comment>
<comment type="similarity">
    <text evidence="2">Belongs to the flagella basal body rod proteins family.</text>
</comment>
<accession>Q8K9K0</accession>
<name>FLGK_BUCAP</name>
<dbReference type="EMBL" id="AE013218">
    <property type="protein sequence ID" value="AAM67888.1"/>
    <property type="molecule type" value="Genomic_DNA"/>
</dbReference>
<dbReference type="RefSeq" id="WP_011053855.1">
    <property type="nucleotide sequence ID" value="NC_004061.1"/>
</dbReference>
<dbReference type="SMR" id="Q8K9K0"/>
<dbReference type="STRING" id="198804.BUsg_334"/>
<dbReference type="GeneID" id="93003805"/>
<dbReference type="KEGG" id="bas:BUsg_334"/>
<dbReference type="eggNOG" id="COG1256">
    <property type="taxonomic scope" value="Bacteria"/>
</dbReference>
<dbReference type="HOGENOM" id="CLU_510637_0_0_6"/>
<dbReference type="Proteomes" id="UP000000416">
    <property type="component" value="Chromosome"/>
</dbReference>
<dbReference type="GO" id="GO:0009424">
    <property type="term" value="C:bacterial-type flagellum hook"/>
    <property type="evidence" value="ECO:0007669"/>
    <property type="project" value="InterPro"/>
</dbReference>
<dbReference type="GO" id="GO:0005576">
    <property type="term" value="C:extracellular region"/>
    <property type="evidence" value="ECO:0007669"/>
    <property type="project" value="UniProtKB-SubCell"/>
</dbReference>
<dbReference type="GO" id="GO:0005198">
    <property type="term" value="F:structural molecule activity"/>
    <property type="evidence" value="ECO:0007669"/>
    <property type="project" value="InterPro"/>
</dbReference>
<dbReference type="GO" id="GO:0044780">
    <property type="term" value="P:bacterial-type flagellum assembly"/>
    <property type="evidence" value="ECO:0007669"/>
    <property type="project" value="InterPro"/>
</dbReference>
<dbReference type="InterPro" id="IPR002371">
    <property type="entry name" value="FlgK"/>
</dbReference>
<dbReference type="InterPro" id="IPR049119">
    <property type="entry name" value="FlgK_D2-like"/>
</dbReference>
<dbReference type="InterPro" id="IPR053927">
    <property type="entry name" value="FlgK_helical"/>
</dbReference>
<dbReference type="PANTHER" id="PTHR30033:SF2">
    <property type="entry name" value="FLAGELLAR HOOK PROTEIN"/>
    <property type="match status" value="1"/>
</dbReference>
<dbReference type="PANTHER" id="PTHR30033">
    <property type="entry name" value="FLAGELLAR HOOK-ASSOCIATED PROTEIN 1"/>
    <property type="match status" value="1"/>
</dbReference>
<dbReference type="Pfam" id="PF21158">
    <property type="entry name" value="flgK_1st_1"/>
    <property type="match status" value="1"/>
</dbReference>
<dbReference type="Pfam" id="PF22638">
    <property type="entry name" value="FlgK_D1"/>
    <property type="match status" value="1"/>
</dbReference>
<dbReference type="PRINTS" id="PR01005">
    <property type="entry name" value="FLGHOOKAP1"/>
</dbReference>
<dbReference type="SUPFAM" id="SSF64518">
    <property type="entry name" value="Phase 1 flagellin"/>
    <property type="match status" value="1"/>
</dbReference>
<gene>
    <name type="primary">flgK</name>
    <name type="ordered locus">BUsg_334</name>
</gene>
<keyword id="KW-0975">Bacterial flagellum</keyword>
<keyword id="KW-0964">Secreted</keyword>
<feature type="chain" id="PRO_0000180861" description="Flagellar hook-associated protein 1">
    <location>
        <begin position="1"/>
        <end position="544"/>
    </location>
</feature>
<protein>
    <recommendedName>
        <fullName>Flagellar hook-associated protein 1</fullName>
        <shortName>HAP1</shortName>
    </recommendedName>
</protein>
<reference key="1">
    <citation type="journal article" date="2002" name="Science">
        <title>50 million years of genomic stasis in endosymbiotic bacteria.</title>
        <authorList>
            <person name="Tamas I."/>
            <person name="Klasson L."/>
            <person name="Canbaeck B."/>
            <person name="Naeslund A.K."/>
            <person name="Eriksson A.-S."/>
            <person name="Wernegreen J.J."/>
            <person name="Sandstroem J.P."/>
            <person name="Moran N.A."/>
            <person name="Andersson S.G.E."/>
        </authorList>
    </citation>
    <scope>NUCLEOTIDE SEQUENCE [LARGE SCALE GENOMIC DNA]</scope>
    <source>
        <strain>Sg</strain>
    </source>
</reference>
<sequence>MSSILTSTVTGIDAIKILINNTADKIINSKYKDEIKHNVFVENTVDESNFNAGVKIKKIYDDYNDFLKEEKRKISERVQDEQTKIEEYLKLEDLFGEKSNIFTLLINQLYSSIENDIVNNHGNVFNENIENNLNTIIHELKNFDEKLSFLERDVKESIKEKIKQANILINKIYDTNIDIRFFPTAQLPNRIDSFIDKRDKLIDELNDIIGVKVIKENSTFKVCLNNGMCIIDDYNKKNLMTLTSDTDDKYISVGYFDDNEQRLKKIEHMIPSASLGALLTFRREDLQNAKNKIGQLTINFADSINSVHTLGYDILGNIGKQVFKISNPEIISSSQNQSYLPTSIKWVDTADAQDTNYIVFLKNNHWTVTRLRDHSVVEPDIYQQDNNTYITFDGIEFKIEGNDAEGNMYMIKPYSKTLNELELLIIKNDLFSISSSDDLNQKNRNNAIKIQHLHQEKIVNKKETLYESYLRFLKSISYKCNDLEEKVPFKRNMIEILNNKKLSESDDMYENYQNLNYEQKCYLANVKVLKMAETIFDEIVDCYS</sequence>
<proteinExistence type="inferred from homology"/>
<evidence type="ECO:0000250" key="1"/>
<evidence type="ECO:0000305" key="2"/>